<accession>Q9HAP6</accession>
<feature type="chain" id="PRO_0000189626" description="Protein lin-7 homolog B">
    <location>
        <begin position="1"/>
        <end position="207"/>
    </location>
</feature>
<feature type="domain" description="L27" evidence="5">
    <location>
        <begin position="10"/>
        <end position="65"/>
    </location>
</feature>
<feature type="domain" description="PDZ" evidence="4">
    <location>
        <begin position="93"/>
        <end position="175"/>
    </location>
</feature>
<feature type="region of interest" description="Disordered" evidence="6">
    <location>
        <begin position="187"/>
        <end position="207"/>
    </location>
</feature>
<feature type="short sequence motif" description="Kinase interacting site" evidence="1">
    <location>
        <begin position="1"/>
        <end position="13"/>
    </location>
</feature>
<feature type="compositionally biased region" description="Polar residues" evidence="6">
    <location>
        <begin position="197"/>
        <end position="207"/>
    </location>
</feature>
<feature type="splice variant" id="VSP_042156" description="In isoform 2." evidence="12">
    <location>
        <begin position="77"/>
        <end position="146"/>
    </location>
</feature>
<feature type="sequence conflict" description="In Ref. 3; AI826082." evidence="13" ref="3">
    <original>G</original>
    <variation>R</variation>
    <location>
        <position position="65"/>
    </location>
</feature>
<feature type="strand" evidence="14">
    <location>
        <begin position="93"/>
        <end position="97"/>
    </location>
</feature>
<feature type="strand" evidence="14">
    <location>
        <begin position="105"/>
        <end position="108"/>
    </location>
</feature>
<feature type="strand" evidence="14">
    <location>
        <begin position="110"/>
        <end position="114"/>
    </location>
</feature>
<feature type="strand" evidence="14">
    <location>
        <begin position="118"/>
        <end position="122"/>
    </location>
</feature>
<feature type="helix" evidence="14">
    <location>
        <begin position="127"/>
        <end position="131"/>
    </location>
</feature>
<feature type="strand" evidence="14">
    <location>
        <begin position="139"/>
        <end position="143"/>
    </location>
</feature>
<feature type="helix" evidence="14">
    <location>
        <begin position="153"/>
        <end position="162"/>
    </location>
</feature>
<feature type="strand" evidence="14">
    <location>
        <begin position="165"/>
        <end position="171"/>
    </location>
</feature>
<proteinExistence type="evidence at protein level"/>
<keyword id="KW-0002">3D-structure</keyword>
<keyword id="KW-0025">Alternative splicing</keyword>
<keyword id="KW-0965">Cell junction</keyword>
<keyword id="KW-1003">Cell membrane</keyword>
<keyword id="KW-0268">Exocytosis</keyword>
<keyword id="KW-0472">Membrane</keyword>
<keyword id="KW-0628">Postsynaptic cell membrane</keyword>
<keyword id="KW-0653">Protein transport</keyword>
<keyword id="KW-1267">Proteomics identification</keyword>
<keyword id="KW-1185">Reference proteome</keyword>
<keyword id="KW-0770">Synapse</keyword>
<keyword id="KW-0796">Tight junction</keyword>
<keyword id="KW-0813">Transport</keyword>
<organism>
    <name type="scientific">Homo sapiens</name>
    <name type="common">Human</name>
    <dbReference type="NCBI Taxonomy" id="9606"/>
    <lineage>
        <taxon>Eukaryota</taxon>
        <taxon>Metazoa</taxon>
        <taxon>Chordata</taxon>
        <taxon>Craniata</taxon>
        <taxon>Vertebrata</taxon>
        <taxon>Euteleostomi</taxon>
        <taxon>Mammalia</taxon>
        <taxon>Eutheria</taxon>
        <taxon>Euarchontoglires</taxon>
        <taxon>Primates</taxon>
        <taxon>Haplorrhini</taxon>
        <taxon>Catarrhini</taxon>
        <taxon>Hominidae</taxon>
        <taxon>Homo</taxon>
    </lineage>
</organism>
<gene>
    <name type="primary">LIN7B</name>
    <name type="synonym">MALS2</name>
    <name type="synonym">VELI2</name>
    <name type="ORF">UNQ3116/PRO10200</name>
</gene>
<reference key="1">
    <citation type="journal article" date="2002" name="Am. J. Physiol.">
        <title>Basolateral membrane expression of the Kir 2.3 channel is coordinated by PDZ interaction with Lin-7/CASK complex.</title>
        <authorList>
            <person name="Olsen O."/>
            <person name="Liu H."/>
            <person name="Wade J.B."/>
            <person name="Merot J."/>
            <person name="Welling P.A."/>
        </authorList>
    </citation>
    <scope>NUCLEOTIDE SEQUENCE [MRNA]</scope>
    <scope>SUBCELLULAR LOCATION</scope>
    <scope>FUNCTION</scope>
    <scope>INTERACTION WITH KCNJ4 AND CASK (ISOFORM 1)</scope>
    <source>
        <tissue>Kidney</tissue>
    </source>
</reference>
<reference key="2">
    <citation type="journal article" date="2003" name="Genome Res.">
        <title>The secreted protein discovery initiative (SPDI), a large-scale effort to identify novel human secreted and transmembrane proteins: a bioinformatics assessment.</title>
        <authorList>
            <person name="Clark H.F."/>
            <person name="Gurney A.L."/>
            <person name="Abaya E."/>
            <person name="Baker K."/>
            <person name="Baldwin D.T."/>
            <person name="Brush J."/>
            <person name="Chen J."/>
            <person name="Chow B."/>
            <person name="Chui C."/>
            <person name="Crowley C."/>
            <person name="Currell B."/>
            <person name="Deuel B."/>
            <person name="Dowd P."/>
            <person name="Eaton D."/>
            <person name="Foster J.S."/>
            <person name="Grimaldi C."/>
            <person name="Gu Q."/>
            <person name="Hass P.E."/>
            <person name="Heldens S."/>
            <person name="Huang A."/>
            <person name="Kim H.S."/>
            <person name="Klimowski L."/>
            <person name="Jin Y."/>
            <person name="Johnson S."/>
            <person name="Lee J."/>
            <person name="Lewis L."/>
            <person name="Liao D."/>
            <person name="Mark M.R."/>
            <person name="Robbie E."/>
            <person name="Sanchez C."/>
            <person name="Schoenfeld J."/>
            <person name="Seshagiri S."/>
            <person name="Simmons L."/>
            <person name="Singh J."/>
            <person name="Smith V."/>
            <person name="Stinson J."/>
            <person name="Vagts A."/>
            <person name="Vandlen R.L."/>
            <person name="Watanabe C."/>
            <person name="Wieand D."/>
            <person name="Woods K."/>
            <person name="Xie M.-H."/>
            <person name="Yansura D.G."/>
            <person name="Yi S."/>
            <person name="Yu G."/>
            <person name="Yuan J."/>
            <person name="Zhang M."/>
            <person name="Zhang Z."/>
            <person name="Goddard A.D."/>
            <person name="Wood W.I."/>
            <person name="Godowski P.J."/>
            <person name="Gray A.M."/>
        </authorList>
    </citation>
    <scope>NUCLEOTIDE SEQUENCE [LARGE SCALE MRNA] (ISOFORM 1)</scope>
</reference>
<reference key="3">
    <citation type="journal article" date="2004" name="Genome Res.">
        <title>The status, quality, and expansion of the NIH full-length cDNA project: the Mammalian Gene Collection (MGC).</title>
        <authorList>
            <consortium name="The MGC Project Team"/>
        </authorList>
    </citation>
    <scope>NUCLEOTIDE SEQUENCE [LARGE SCALE MRNA] (ISOFORMS 1 AND 2)</scope>
    <source>
        <tissue>Brain</tissue>
        <tissue>Testis</tissue>
    </source>
</reference>
<reference key="4">
    <citation type="journal article" date="2003" name="Dev. Cell">
        <title>Polar expression of ErbB-2/HER2 in epithelia. Bimodal regulation by Lin-7.</title>
        <authorList>
            <person name="Shelly M."/>
            <person name="Mosesson Y."/>
            <person name="Citri A."/>
            <person name="Lavi S."/>
            <person name="Zwang Y."/>
            <person name="Melamed-Book N."/>
            <person name="Aroeti B."/>
            <person name="Yarden Y."/>
        </authorList>
    </citation>
    <scope>SUBCELLULAR LOCATION</scope>
    <scope>INTERACTION WITH EGFR</scope>
</reference>
<reference key="5">
    <citation type="journal article" date="2004" name="J. Biol. Chem.">
        <title>PSD-95 and Lin-7b interact with acid-sensing ion channel-3 and have opposite effects on H+- gated current.</title>
        <authorList>
            <person name="Hruska-Hageman A.M."/>
            <person name="Benson C.J."/>
            <person name="Leonard A.S."/>
            <person name="Price M.P."/>
            <person name="Welsh M.J."/>
        </authorList>
    </citation>
    <scope>INTERACTION WITH ASIC3</scope>
</reference>
<reference key="6">
    <citation type="journal article" date="2006" name="Neurosci. Res.">
        <title>Identification of a cell polarity-related protein, Lin-7B, as a binding partner for a Rho effector, Rhotekin, and their possible interaction in neurons.</title>
        <authorList>
            <person name="Sudo K."/>
            <person name="Ito H."/>
            <person name="Iwamoto I."/>
            <person name="Morishita R."/>
            <person name="Asano T."/>
            <person name="Nagata K."/>
        </authorList>
    </citation>
    <scope>INTERACTION WITH RTKN</scope>
</reference>
<reference key="7">
    <citation type="journal article" date="2007" name="J. Biol. Chem.">
        <title>The stardust family protein MPP7 forms a tripartite complex with LIN7 and DLG1 that regulates the stability and localization of DLG1 to cell junctions.</title>
        <authorList>
            <person name="Bohl J."/>
            <person name="Brimer N."/>
            <person name="Lyons C."/>
            <person name="Vande Pol S.B."/>
        </authorList>
    </citation>
    <scope>INTERACTION WITH MPP7 AND DLG1</scope>
</reference>
<reference key="8">
    <citation type="submission" date="2006-10" db="PDB data bank">
        <title>Solution structure of the PDZ domain from human LIN-7 homolog B.</title>
        <authorList>
            <consortium name="RIKEN structural genomics initiative (RSGI)"/>
        </authorList>
    </citation>
    <scope>STRUCTURE BY NMR OF 93-172</scope>
</reference>
<protein>
    <recommendedName>
        <fullName>Protein lin-7 homolog B</fullName>
        <shortName>Lin-7B</shortName>
        <shortName>hLin7B</shortName>
    </recommendedName>
    <alternativeName>
        <fullName>Mammalian lin-seven protein 2</fullName>
        <shortName>MALS-2</shortName>
    </alternativeName>
    <alternativeName>
        <fullName>Vertebrate lin-7 homolog 2</fullName>
        <shortName>Veli-2</shortName>
        <shortName>hVeli2</shortName>
    </alternativeName>
</protein>
<evidence type="ECO:0000250" key="1"/>
<evidence type="ECO:0000250" key="2">
    <source>
        <dbReference type="UniProtKB" id="O88951"/>
    </source>
</evidence>
<evidence type="ECO:0000250" key="3">
    <source>
        <dbReference type="UniProtKB" id="Q9Z252"/>
    </source>
</evidence>
<evidence type="ECO:0000255" key="4">
    <source>
        <dbReference type="PROSITE-ProRule" id="PRU00143"/>
    </source>
</evidence>
<evidence type="ECO:0000255" key="5">
    <source>
        <dbReference type="PROSITE-ProRule" id="PRU00365"/>
    </source>
</evidence>
<evidence type="ECO:0000256" key="6">
    <source>
        <dbReference type="SAM" id="MobiDB-lite"/>
    </source>
</evidence>
<evidence type="ECO:0000269" key="7">
    <source>
    </source>
</evidence>
<evidence type="ECO:0000269" key="8">
    <source>
    </source>
</evidence>
<evidence type="ECO:0000269" key="9">
    <source>
    </source>
</evidence>
<evidence type="ECO:0000269" key="10">
    <source>
    </source>
</evidence>
<evidence type="ECO:0000269" key="11">
    <source>
    </source>
</evidence>
<evidence type="ECO:0000303" key="12">
    <source>
    </source>
</evidence>
<evidence type="ECO:0000305" key="13"/>
<evidence type="ECO:0007829" key="14">
    <source>
        <dbReference type="PDB" id="2DKR"/>
    </source>
</evidence>
<dbReference type="EMBL" id="AF311862">
    <property type="protein sequence ID" value="AAG34117.1"/>
    <property type="molecule type" value="mRNA"/>
</dbReference>
<dbReference type="EMBL" id="AY358744">
    <property type="protein sequence ID" value="AAQ89104.1"/>
    <property type="molecule type" value="mRNA"/>
</dbReference>
<dbReference type="EMBL" id="AI826082">
    <property type="status" value="NOT_ANNOTATED_CDS"/>
    <property type="molecule type" value="mRNA"/>
</dbReference>
<dbReference type="EMBL" id="BC027618">
    <property type="protein sequence ID" value="AAH27618.1"/>
    <property type="molecule type" value="mRNA"/>
</dbReference>
<dbReference type="CCDS" id="CCDS12757.1">
    <molecule id="Q9HAP6-1"/>
</dbReference>
<dbReference type="CCDS" id="CCDS77328.1">
    <molecule id="Q9HAP6-2"/>
</dbReference>
<dbReference type="RefSeq" id="NP_001295348.1">
    <molecule id="Q9HAP6-2"/>
    <property type="nucleotide sequence ID" value="NM_001308419.2"/>
</dbReference>
<dbReference type="RefSeq" id="NP_071448.1">
    <molecule id="Q9HAP6-1"/>
    <property type="nucleotide sequence ID" value="NM_022165.3"/>
</dbReference>
<dbReference type="PDB" id="2DKR">
    <property type="method" value="NMR"/>
    <property type="chains" value="A=93-172"/>
</dbReference>
<dbReference type="PDBsum" id="2DKR"/>
<dbReference type="SMR" id="Q9HAP6"/>
<dbReference type="BioGRID" id="122079">
    <property type="interactions" value="36"/>
</dbReference>
<dbReference type="ComplexPortal" id="CPX-7743">
    <property type="entry name" value="LIN-10-LIN-2-LIN-7 complex, LIN7B variant"/>
</dbReference>
<dbReference type="FunCoup" id="Q9HAP6">
    <property type="interactions" value="404"/>
</dbReference>
<dbReference type="IntAct" id="Q9HAP6">
    <property type="interactions" value="30"/>
</dbReference>
<dbReference type="MINT" id="Q9HAP6"/>
<dbReference type="STRING" id="9606.ENSP00000221459"/>
<dbReference type="GlyGen" id="Q9HAP6">
    <property type="glycosylation" value="1 site, 1 O-linked glycan (1 site)"/>
</dbReference>
<dbReference type="iPTMnet" id="Q9HAP6"/>
<dbReference type="PhosphoSitePlus" id="Q9HAP6"/>
<dbReference type="BioMuta" id="LIN7B"/>
<dbReference type="DMDM" id="59798472"/>
<dbReference type="jPOST" id="Q9HAP6"/>
<dbReference type="MassIVE" id="Q9HAP6"/>
<dbReference type="PaxDb" id="9606-ENSP00000221459"/>
<dbReference type="PeptideAtlas" id="Q9HAP6"/>
<dbReference type="ProteomicsDB" id="81416">
    <molecule id="Q9HAP6-1"/>
</dbReference>
<dbReference type="ProteomicsDB" id="81417">
    <molecule id="Q9HAP6-2"/>
</dbReference>
<dbReference type="Antibodypedia" id="31908">
    <property type="antibodies" value="267 antibodies from 26 providers"/>
</dbReference>
<dbReference type="DNASU" id="64130"/>
<dbReference type="Ensembl" id="ENST00000221459.7">
    <molecule id="Q9HAP6-1"/>
    <property type="protein sequence ID" value="ENSP00000221459.2"/>
    <property type="gene ID" value="ENSG00000104863.12"/>
</dbReference>
<dbReference type="Ensembl" id="ENST00000391864.7">
    <molecule id="Q9HAP6-2"/>
    <property type="protein sequence ID" value="ENSP00000375737.3"/>
    <property type="gene ID" value="ENSG00000104863.12"/>
</dbReference>
<dbReference type="GeneID" id="64130"/>
<dbReference type="KEGG" id="hsa:64130"/>
<dbReference type="MANE-Select" id="ENST00000221459.7">
    <property type="protein sequence ID" value="ENSP00000221459.2"/>
    <property type="RefSeq nucleotide sequence ID" value="NM_022165.3"/>
    <property type="RefSeq protein sequence ID" value="NP_071448.1"/>
</dbReference>
<dbReference type="UCSC" id="uc002pmp.3">
    <molecule id="Q9HAP6-1"/>
    <property type="organism name" value="human"/>
</dbReference>
<dbReference type="AGR" id="HGNC:17788"/>
<dbReference type="CTD" id="64130"/>
<dbReference type="DisGeNET" id="64130"/>
<dbReference type="GeneCards" id="LIN7B"/>
<dbReference type="HGNC" id="HGNC:17788">
    <property type="gene designation" value="LIN7B"/>
</dbReference>
<dbReference type="HPA" id="ENSG00000104863">
    <property type="expression patterns" value="Tissue enhanced (brain, skeletal muscle)"/>
</dbReference>
<dbReference type="MalaCards" id="LIN7B"/>
<dbReference type="MIM" id="612331">
    <property type="type" value="gene"/>
</dbReference>
<dbReference type="neXtProt" id="NX_Q9HAP6"/>
<dbReference type="OpenTargets" id="ENSG00000104863"/>
<dbReference type="PharmGKB" id="PA134914453"/>
<dbReference type="VEuPathDB" id="HostDB:ENSG00000104863"/>
<dbReference type="eggNOG" id="KOG3550">
    <property type="taxonomic scope" value="Eukaryota"/>
</dbReference>
<dbReference type="GeneTree" id="ENSGT00940000153222"/>
<dbReference type="HOGENOM" id="CLU_097962_0_0_1"/>
<dbReference type="InParanoid" id="Q9HAP6"/>
<dbReference type="OMA" id="TDMATMT"/>
<dbReference type="OrthoDB" id="10056216at2759"/>
<dbReference type="PAN-GO" id="Q9HAP6">
    <property type="GO annotations" value="8 GO annotations based on evolutionary models"/>
</dbReference>
<dbReference type="PhylomeDB" id="Q9HAP6"/>
<dbReference type="TreeFam" id="TF316850"/>
<dbReference type="PathwayCommons" id="Q9HAP6"/>
<dbReference type="Reactome" id="R-HSA-212676">
    <property type="pathway name" value="Dopamine Neurotransmitter Release Cycle"/>
</dbReference>
<dbReference type="Reactome" id="R-HSA-5666185">
    <property type="pathway name" value="RHO GTPases Activate Rhotekin and Rhophilins"/>
</dbReference>
<dbReference type="Reactome" id="R-HSA-6794361">
    <property type="pathway name" value="Neurexins and neuroligins"/>
</dbReference>
<dbReference type="Reactome" id="R-HSA-9609736">
    <property type="pathway name" value="Assembly and cell surface presentation of NMDA receptors"/>
</dbReference>
<dbReference type="SignaLink" id="Q9HAP6"/>
<dbReference type="BioGRID-ORCS" id="64130">
    <property type="hits" value="12 hits in 1159 CRISPR screens"/>
</dbReference>
<dbReference type="CD-CODE" id="FB4E32DD">
    <property type="entry name" value="Presynaptic clusters and postsynaptic densities"/>
</dbReference>
<dbReference type="EvolutionaryTrace" id="Q9HAP6"/>
<dbReference type="GeneWiki" id="LIN7B"/>
<dbReference type="GenomeRNAi" id="64130"/>
<dbReference type="Pharos" id="Q9HAP6">
    <property type="development level" value="Tbio"/>
</dbReference>
<dbReference type="PRO" id="PR:Q9HAP6"/>
<dbReference type="Proteomes" id="UP000005640">
    <property type="component" value="Chromosome 19"/>
</dbReference>
<dbReference type="RNAct" id="Q9HAP6">
    <property type="molecule type" value="protein"/>
</dbReference>
<dbReference type="Bgee" id="ENSG00000104863">
    <property type="expression patterns" value="Expressed in lower esophagus mucosa and 173 other cell types or tissues"/>
</dbReference>
<dbReference type="ExpressionAtlas" id="Q9HAP6">
    <property type="expression patterns" value="baseline and differential"/>
</dbReference>
<dbReference type="GO" id="GO:0016323">
    <property type="term" value="C:basolateral plasma membrane"/>
    <property type="evidence" value="ECO:0000318"/>
    <property type="project" value="GO_Central"/>
</dbReference>
<dbReference type="GO" id="GO:0005923">
    <property type="term" value="C:bicellular tight junction"/>
    <property type="evidence" value="ECO:0007669"/>
    <property type="project" value="UniProtKB-SubCell"/>
</dbReference>
<dbReference type="GO" id="GO:0005911">
    <property type="term" value="C:cell-cell junction"/>
    <property type="evidence" value="ECO:0000318"/>
    <property type="project" value="GO_Central"/>
</dbReference>
<dbReference type="GO" id="GO:0097025">
    <property type="term" value="C:MPP7-DLG1-LIN7 complex"/>
    <property type="evidence" value="ECO:0000318"/>
    <property type="project" value="GO_Central"/>
</dbReference>
<dbReference type="GO" id="GO:0005886">
    <property type="term" value="C:plasma membrane"/>
    <property type="evidence" value="ECO:0000304"/>
    <property type="project" value="Reactome"/>
</dbReference>
<dbReference type="GO" id="GO:0098839">
    <property type="term" value="C:postsynaptic density membrane"/>
    <property type="evidence" value="ECO:0007669"/>
    <property type="project" value="UniProtKB-SubCell"/>
</dbReference>
<dbReference type="GO" id="GO:0098793">
    <property type="term" value="C:presynapse"/>
    <property type="evidence" value="ECO:0007669"/>
    <property type="project" value="GOC"/>
</dbReference>
<dbReference type="GO" id="GO:0045202">
    <property type="term" value="C:synapse"/>
    <property type="evidence" value="ECO:0000318"/>
    <property type="project" value="GO_Central"/>
</dbReference>
<dbReference type="GO" id="GO:0019904">
    <property type="term" value="F:protein domain specific binding"/>
    <property type="evidence" value="ECO:0000353"/>
    <property type="project" value="BHF-UCL"/>
</dbReference>
<dbReference type="GO" id="GO:0030674">
    <property type="term" value="F:protein-macromolecule adaptor activity"/>
    <property type="evidence" value="ECO:0000318"/>
    <property type="project" value="GO_Central"/>
</dbReference>
<dbReference type="GO" id="GO:0006887">
    <property type="term" value="P:exocytosis"/>
    <property type="evidence" value="ECO:0007669"/>
    <property type="project" value="UniProtKB-KW"/>
</dbReference>
<dbReference type="GO" id="GO:0007269">
    <property type="term" value="P:neurotransmitter secretion"/>
    <property type="evidence" value="ECO:0000318"/>
    <property type="project" value="GO_Central"/>
</dbReference>
<dbReference type="GO" id="GO:0015031">
    <property type="term" value="P:protein transport"/>
    <property type="evidence" value="ECO:0007669"/>
    <property type="project" value="UniProtKB-KW"/>
</dbReference>
<dbReference type="GO" id="GO:0008582">
    <property type="term" value="P:regulation of synaptic assembly at neuromuscular junction"/>
    <property type="evidence" value="ECO:0000318"/>
    <property type="project" value="GO_Central"/>
</dbReference>
<dbReference type="GO" id="GO:0048489">
    <property type="term" value="P:synaptic vesicle transport"/>
    <property type="evidence" value="ECO:0000318"/>
    <property type="project" value="GO_Central"/>
</dbReference>
<dbReference type="CDD" id="cd06796">
    <property type="entry name" value="PDZ_Lin-7-like"/>
    <property type="match status" value="1"/>
</dbReference>
<dbReference type="FunFam" id="2.30.42.10:FF:000039">
    <property type="entry name" value="Lin-7 homolog B"/>
    <property type="match status" value="1"/>
</dbReference>
<dbReference type="Gene3D" id="2.30.42.10">
    <property type="match status" value="1"/>
</dbReference>
<dbReference type="Gene3D" id="1.10.287.650">
    <property type="entry name" value="L27 domain"/>
    <property type="match status" value="1"/>
</dbReference>
<dbReference type="InterPro" id="IPR014775">
    <property type="entry name" value="L27_C"/>
</dbReference>
<dbReference type="InterPro" id="IPR004172">
    <property type="entry name" value="L27_dom"/>
</dbReference>
<dbReference type="InterPro" id="IPR036892">
    <property type="entry name" value="L27_dom_sf"/>
</dbReference>
<dbReference type="InterPro" id="IPR017365">
    <property type="entry name" value="LIN7"/>
</dbReference>
<dbReference type="InterPro" id="IPR051109">
    <property type="entry name" value="MAM_complex_regulator"/>
</dbReference>
<dbReference type="InterPro" id="IPR001478">
    <property type="entry name" value="PDZ"/>
</dbReference>
<dbReference type="InterPro" id="IPR036034">
    <property type="entry name" value="PDZ_sf"/>
</dbReference>
<dbReference type="PANTHER" id="PTHR14063">
    <property type="entry name" value="PROTEIN LIN-7 HOMOLOG"/>
    <property type="match status" value="1"/>
</dbReference>
<dbReference type="Pfam" id="PF02828">
    <property type="entry name" value="L27"/>
    <property type="match status" value="1"/>
</dbReference>
<dbReference type="Pfam" id="PF00595">
    <property type="entry name" value="PDZ"/>
    <property type="match status" value="1"/>
</dbReference>
<dbReference type="PIRSF" id="PIRSF038039">
    <property type="entry name" value="Lin-7_homologue"/>
    <property type="match status" value="1"/>
</dbReference>
<dbReference type="SMART" id="SM00569">
    <property type="entry name" value="L27"/>
    <property type="match status" value="1"/>
</dbReference>
<dbReference type="SMART" id="SM00228">
    <property type="entry name" value="PDZ"/>
    <property type="match status" value="1"/>
</dbReference>
<dbReference type="SUPFAM" id="SSF101288">
    <property type="entry name" value="L27 domain"/>
    <property type="match status" value="1"/>
</dbReference>
<dbReference type="SUPFAM" id="SSF50156">
    <property type="entry name" value="PDZ domain-like"/>
    <property type="match status" value="1"/>
</dbReference>
<dbReference type="PROSITE" id="PS51022">
    <property type="entry name" value="L27"/>
    <property type="match status" value="1"/>
</dbReference>
<dbReference type="PROSITE" id="PS50106">
    <property type="entry name" value="PDZ"/>
    <property type="match status" value="1"/>
</dbReference>
<name>LIN7B_HUMAN</name>
<comment type="function">
    <text evidence="1 2 7">Plays a role in establishing and maintaining the asymmetric distribution of channels and receptors at the plasma membrane of polarized cells. Forms membrane-associated multiprotein complexes that may regulate delivery and recycling of proteins to the correct membrane domains. The tripartite complex composed of LIN7 (LIN7A, LIN7B or LIN7C), CASK and APBA1 associates with the motor protein KIF17 to transport vesicles containing N-methyl-D-aspartate (NMDA) receptor subunit NR2B along microtubules (By similarity). This complex may have the potential to couple synaptic vesicle exocytosis to cell adhesion in brain. Ensures the proper localization of GRIN2B (subunit 2B of the NMDA receptor) to neuronal postsynaptic density and may function in localizing synaptic vesicles at synapses where it is recruited by beta-catenin and cadherin. Required to localize Kir2 channels, GABA transporter (SLC6A12) and EGFR/ERBB1, ERBB2, ERBB3 and ERBB4 to the basolateral membrane of epithelial cells. May increase the amplitude of ASIC3 acid-evoked currents by stabilizing the channel at the cell surface (By similarity).</text>
</comment>
<comment type="subunit">
    <text evidence="2 3 7 8 9 10 11">Forms a complex with CASK and CASKIN1 (By similarity). Component of the brain-specific heterotrimeric complex (LIN-10-LIN-2-LIN-7 complex) composed of at least APBA1, CASK, and LIN7, which associates with the motor protein KIF17 to transport vesicles along microtubules (By similarity). Forms a heterotrimeric complex composed of MMP5, LIN7B and PATJ; the N-terminal L27 domain of PALS1 interacts with the L27 domain of PATJ and the C-terminal L27 domain of PALS1 interacts with the L27 domain of LIN7B (By similarity). Forms a heterotrimeric complex with DLG1 and CASK via their L27 domains (PubMed:11742811, PubMed:17237226). Interacts with DLG4 and GRIN2B as well as CDH1 and CTNNB1, the channels KCNJ12/Kir2.2, KCNJ4/Kir2.3 and probably KCNJ2/Kir2.1 and SLC6A12/BGT-1 via its PDZ domain (PubMed:11742811). The association of LIN7A with cadherin and beta-catenin is calcium-dependent, occurs at synaptic junctions and requires the actin cytoskeleton. Interacts with EGFR, ERBB2, ERBB3 and ERBB4 with both PDZ and KID domains (PubMed:12967566). Associates with KIF17 via APBA1 (By similarity). Interacts with ASIC3 (PubMed:15317815). Interacts with TOPK. Interacts with RTKN (PubMed:16979770). Interacts with APBA1 (By similarity). Interacts with MPP7 (PubMed:17237226). Interacts with DLG2 (By similarity). Interacts with DLG3 (By similarity).</text>
</comment>
<comment type="interaction">
    <interactant intactId="EBI-821335">
        <id>Q9HAP6</id>
    </interactant>
    <interactant intactId="EBI-12007726">
        <id>O14936-4</id>
        <label>CASK</label>
    </interactant>
    <organismsDiffer>false</organismsDiffer>
    <experiments>3</experiments>
</comment>
<comment type="interaction">
    <interactant intactId="EBI-821335">
        <id>Q9HAP6</id>
    </interactant>
    <interactant intactId="EBI-744099">
        <id>Q9H0I2</id>
        <label>ENKD1</label>
    </interactant>
    <organismsDiffer>false</organismsDiffer>
    <experiments>3</experiments>
</comment>
<comment type="interaction">
    <interactant intactId="EBI-821335">
        <id>Q9HAP6</id>
    </interactant>
    <interactant intactId="EBI-5280229">
        <id>Q9BXY0</id>
        <label>MAK16</label>
    </interactant>
    <organismsDiffer>false</organismsDiffer>
    <experiments>3</experiments>
</comment>
<comment type="interaction">
    <interactant intactId="EBI-821335">
        <id>Q9HAP6</id>
    </interactant>
    <interactant intactId="EBI-14385193">
        <id>Q14168-4</id>
        <label>MPP2</label>
    </interactant>
    <organismsDiffer>false</organismsDiffer>
    <experiments>3</experiments>
</comment>
<comment type="interaction">
    <interactant intactId="EBI-821335">
        <id>Q9HAP6</id>
    </interactant>
    <interactant intactId="EBI-716157">
        <id>Q13368</id>
        <label>MPP3</label>
    </interactant>
    <organismsDiffer>false</organismsDiffer>
    <experiments>9</experiments>
</comment>
<comment type="interaction">
    <interactant intactId="EBI-821335">
        <id>Q9HAP6</id>
    </interactant>
    <interactant intactId="EBI-2514004">
        <id>Q5T2T1</id>
        <label>MPP7</label>
    </interactant>
    <organismsDiffer>false</organismsDiffer>
    <experiments>5</experiments>
</comment>
<comment type="interaction">
    <interactant intactId="EBI-821335">
        <id>Q9HAP6</id>
    </interactant>
    <interactant intactId="EBI-741158">
        <id>Q96HA8</id>
        <label>NTAQ1</label>
    </interactant>
    <organismsDiffer>false</organismsDiffer>
    <experiments>3</experiments>
</comment>
<comment type="interaction">
    <interactant intactId="EBI-821335">
        <id>Q9HAP6</id>
    </interactant>
    <interactant intactId="EBI-2513978">
        <id>Q8N3R9</id>
        <label>PALS1</label>
    </interactant>
    <organismsDiffer>false</organismsDiffer>
    <experiments>5</experiments>
</comment>
<comment type="interaction">
    <interactant intactId="EBI-821335">
        <id>Q9HAP6</id>
    </interactant>
    <interactant intactId="EBI-2683764">
        <id>Q9NZW5</id>
        <label>PALS2</label>
    </interactant>
    <organismsDiffer>false</organismsDiffer>
    <experiments>7</experiments>
</comment>
<comment type="interaction">
    <interactant intactId="EBI-821335">
        <id>Q9HAP6</id>
    </interactant>
    <interactant intactId="EBI-372273">
        <id>P20618</id>
        <label>PSMB1</label>
    </interactant>
    <organismsDiffer>false</organismsDiffer>
    <experiments>3</experiments>
</comment>
<comment type="interaction">
    <interactant intactId="EBI-821335">
        <id>Q9HAP6</id>
    </interactant>
    <interactant intactId="EBI-11955057">
        <id>Q8N8B7-2</id>
        <label>TCEANC</label>
    </interactant>
    <organismsDiffer>false</organismsDiffer>
    <experiments>3</experiments>
</comment>
<comment type="interaction">
    <interactant intactId="EBI-821335">
        <id>Q9HAP6</id>
    </interactant>
    <interactant intactId="EBI-2819919">
        <id>Q8WVT3</id>
        <label>TRAPPC12</label>
    </interactant>
    <organismsDiffer>false</organismsDiffer>
    <experiments>3</experiments>
</comment>
<comment type="subcellular location">
    <subcellularLocation>
        <location evidence="2">Cell membrane</location>
        <topology evidence="2">Peripheral membrane protein</topology>
    </subcellularLocation>
    <subcellularLocation>
        <location evidence="7 8">Basolateral cell membrane</location>
        <topology evidence="2">Peripheral membrane protein</topology>
    </subcellularLocation>
    <subcellularLocation>
        <location evidence="2">Cell junction</location>
    </subcellularLocation>
    <subcellularLocation>
        <location evidence="2">Postsynaptic density membrane</location>
        <topology evidence="2">Peripheral membrane protein</topology>
    </subcellularLocation>
    <subcellularLocation>
        <location evidence="2">Cell junction</location>
        <location evidence="2">Tight junction</location>
    </subcellularLocation>
    <text evidence="7">Mainly basolateral in renal epithelial cells.</text>
</comment>
<comment type="alternative products">
    <event type="alternative splicing"/>
    <isoform>
        <id>Q9HAP6-1</id>
        <name>1</name>
        <sequence type="displayed"/>
    </isoform>
    <isoform>
        <id>Q9HAP6-2</id>
        <name>2</name>
        <sequence type="described" ref="VSP_042156"/>
    </isoform>
</comment>
<comment type="domain">
    <text evidence="1">The kinase interacting site is required for proper delivery of ERBB2 to the basolateral membrane.</text>
</comment>
<comment type="domain">
    <text evidence="1">The PDZ domain regulates endocytosis and recycling of the receptor at the membrane.</text>
</comment>
<comment type="domain">
    <text evidence="1">The L27 domain mediates interaction with CASK and is involved in the formation of multimeric complexes and the association of LIN7 to membranes.</text>
</comment>
<comment type="similarity">
    <text evidence="13">Belongs to the lin-7 family.</text>
</comment>
<sequence length="207" mass="22896">MAALVEPLGLERDVSRAVELLERLQRSGELPPQKLQALQRVLQSRFCSAIREVYEQLYDTLDITGSAEIRAHATAKATVAAFTASEGHAHPRVVELPKTDEGLGFNIMGGKEQNSPIYISRVIPGGVADRHGGLKRGDQLLSVNGVSVEGEQHEKAVELLKAAQGSVKLVVRYTPRVLEEMEARFEKMRSARRRQQHQSYSSLESRG</sequence>